<keyword id="KW-1222">Bradykinin receptor impairing toxin</keyword>
<keyword id="KW-0903">Direct protein sequencing</keyword>
<keyword id="KW-1213">G-protein coupled receptor impairing toxin</keyword>
<keyword id="KW-0382">Hypotensive agent</keyword>
<keyword id="KW-0597">Phosphoprotein</keyword>
<keyword id="KW-0964">Secreted</keyword>
<keyword id="KW-0800">Toxin</keyword>
<dbReference type="iPTMnet" id="P84190"/>
<dbReference type="GO" id="GO:0005576">
    <property type="term" value="C:extracellular region"/>
    <property type="evidence" value="ECO:0007669"/>
    <property type="project" value="UniProtKB-SubCell"/>
</dbReference>
<dbReference type="GO" id="GO:0090729">
    <property type="term" value="F:toxin activity"/>
    <property type="evidence" value="ECO:0007669"/>
    <property type="project" value="UniProtKB-KW"/>
</dbReference>
<dbReference type="GO" id="GO:0008217">
    <property type="term" value="P:regulation of blood pressure"/>
    <property type="evidence" value="ECO:0007669"/>
    <property type="project" value="UniProtKB-KW"/>
</dbReference>
<comment type="function">
    <molecule>Hypotensin-2</molecule>
    <text evidence="3 5 7">Agonist of the B2 bradykinin receptor (BDKRB2) (By similarity). Potentiates the hypotensive effect of bradykinin (BK) and induces a direct vasorelaxing effect, independently of BK, by endothelium- and nitric oxide (NO)-dependent mechanisms in rat aortic ring preparations (By similarity). Does not inhibit the angiotensin-converting enzyme (ACE) (By similarity). Also exerts proangiogenic, antiinflammatory, and antifibrogenic activities (By similarity). Does not inhibit the angiotensin-converting enzyme (ACE) but weakly increases its activity, and weakly inhibits neprilysin (NEP) in a non-competitive manner (PubMed:18445483, PubMed:34941683). Exerts intermediate cytotoxicity and pro-inflammatory effects on mouse macrophages, and increases the phagocytic activity of these murine cells (By similarity) (PubMed:18445483, PubMed:34941683).</text>
</comment>
<comment type="function">
    <molecule>Cryptide TyPep-8</molecule>
    <text evidence="2 8">Presents weak hemolytic activity at physiological concentrations (micromolar range), and weak lactate dehydrogenase (LDH) release from mast cells. Does not induce mast cell degranulation, and antimicrobial effects (By similarity). In vivo, causes intense pain (but no edema formation), when injected in mice hind paws. Also induces discomfort and anxiety in mice, as it moderately diminishes locomotion and moderately increases rearing behavior (PubMed:38408354).</text>
</comment>
<comment type="subcellular location">
    <subcellularLocation>
        <location evidence="5 8">Secreted</location>
    </subcellularLocation>
</comment>
<comment type="tissue specificity">
    <text evidence="13 14">Expressed by the venom gland.</text>
</comment>
<comment type="mass spectrometry">
    <molecule>Hypotensin-2</molecule>
</comment>
<comment type="mass spectrometry">
    <molecule>Hypotensin-4</molecule>
</comment>
<comment type="miscellaneous">
    <text evidence="12">The primary structure of this cryptide TyPep-8 is identical to that of cryptide Pep-7 from Tityus obscurus (AC P0DRF2).</text>
</comment>
<comment type="similarity">
    <text evidence="12">Belongs to the non-disulfide-bridged peptide (NDBP) superfamily.</text>
</comment>
<organism>
    <name type="scientific">Tityus serrulatus</name>
    <name type="common">Brazilian scorpion</name>
    <dbReference type="NCBI Taxonomy" id="6887"/>
    <lineage>
        <taxon>Eukaryota</taxon>
        <taxon>Metazoa</taxon>
        <taxon>Ecdysozoa</taxon>
        <taxon>Arthropoda</taxon>
        <taxon>Chelicerata</taxon>
        <taxon>Arachnida</taxon>
        <taxon>Scorpiones</taxon>
        <taxon>Buthida</taxon>
        <taxon>Buthoidea</taxon>
        <taxon>Buthidae</taxon>
        <taxon>Tityus</taxon>
    </lineage>
</organism>
<reference key="1">
    <citation type="journal article" date="2008" name="Biochem. Biophys. Res. Commun.">
        <title>Tityus serrulatus hypotensins: a new family of peptides from scorpion venom.</title>
        <authorList>
            <person name="Verano-Braga T."/>
            <person name="Rocha-Resende C."/>
            <person name="Silva D.M."/>
            <person name="Ianzer D."/>
            <person name="Martin-Eauclaire M.F."/>
            <person name="Bougis P.E."/>
            <person name="de Lima M.E."/>
            <person name="Santos R.A.S."/>
            <person name="Pimenta A.M.C."/>
        </authorList>
    </citation>
    <scope>PROTEIN SEQUENCE</scope>
    <scope>SUBCELLULAR LOCATION</scope>
    <scope>MASS SPECTROMETRY</scope>
    <source>
        <tissue>Venom</tissue>
    </source>
</reference>
<reference key="2">
    <citation type="journal article" date="2024" name="J. Nat. Prod.">
        <title>Profiling the linear peptides of venom from the Brazilian scorpion Tityus serrulatus: structural and functional characterization.</title>
        <authorList>
            <person name="Dias N.B."/>
            <person name="de Souza B.M."/>
            <person name="Cid-Alda F."/>
            <person name="Dorce V.A.C."/>
            <person name="Cocchi F.K."/>
            <person name="Palma M.S."/>
        </authorList>
    </citation>
    <scope>PROTEIN SEQUENCE OF 17-25 (TYPEP-8)</scope>
    <scope>IDENTIFICATION BY MASS SPECTROMETRY</scope>
    <scope>SUBCELLULAR LOCATION</scope>
    <scope>SYNTHESIS OF 17-25</scope>
    <scope>FUNCTION</scope>
    <scope>BIOASSAY</scope>
    <source>
        <tissue>Venom</tissue>
    </source>
</reference>
<reference key="3">
    <citation type="journal article" date="2013" name="J. Proteome Res.">
        <title>Moving pieces in a venomic puzzle: unveiling post-translationally modified toxins from Tityus serrulatus.</title>
        <authorList>
            <person name="Verano-Braga T."/>
            <person name="Dutra A.A."/>
            <person name="Leon I.R."/>
            <person name="Melo-Braga M.N."/>
            <person name="Roepstorff P."/>
            <person name="Pimenta A.M."/>
            <person name="Kjeldsen F."/>
        </authorList>
    </citation>
    <scope>IDENTIFICATION BY MASS SPECTROMETRY</scope>
    <scope>PHOSPHORYLATION AT SER-6</scope>
</reference>
<reference key="4">
    <citation type="journal article" date="2021" name="Toxins">
        <title>New insights into the hypotensins from Tityus serrulatus venom: pro-inflammatory and vasopeptidases modulation activities.</title>
        <authorList>
            <person name="Duzzi B."/>
            <person name="Silva C.C.F."/>
            <person name="Kodama R.T."/>
            <person name="Cajado-Carvalho D."/>
            <person name="Squaiella-Baptistao C.C."/>
            <person name="Portaro F.C.V."/>
        </authorList>
    </citation>
    <scope>FUNCTION</scope>
    <scope>SYNTHESIS OF 1-25</scope>
</reference>
<reference key="5">
    <citation type="journal article" date="2009" name="Protein Pept. Lett.">
        <title>Tityus serrulatus scorpion venom and toxins: an overview.</title>
        <authorList>
            <person name="Cologna C.T."/>
            <person name="Marcussi S."/>
            <person name="Giglio J.R."/>
            <person name="Soares A.M."/>
            <person name="Arantes E.C."/>
        </authorList>
    </citation>
    <scope>NOMENCLATURE</scope>
</reference>
<sequence>AEIDFSGIPEDIIKEIKETNAKPPA</sequence>
<feature type="peptide" id="PRO_0000239434" description="Hypotensin-2" evidence="5">
    <location>
        <begin position="1"/>
        <end position="25"/>
    </location>
</feature>
<feature type="peptide" id="PRO_0000239436" description="Hypotensin-4" evidence="5">
    <location>
        <begin position="1"/>
        <end position="24"/>
    </location>
</feature>
<feature type="peptide" id="PRO_0000461728" description="Cryptide TyPep-8" evidence="8">
    <location>
        <begin position="17"/>
        <end position="25"/>
    </location>
</feature>
<feature type="region of interest" description="Disordered" evidence="4">
    <location>
        <begin position="1"/>
        <end position="25"/>
    </location>
</feature>
<feature type="compositionally biased region" description="Basic and acidic residues" evidence="4">
    <location>
        <begin position="11"/>
        <end position="25"/>
    </location>
</feature>
<feature type="site" description="Important for potentiating BK effects" evidence="1">
    <location>
        <begin position="23"/>
        <end position="24"/>
    </location>
</feature>
<feature type="modified residue" description="Phosphoserine" evidence="6">
    <location>
        <position position="6"/>
    </location>
</feature>
<evidence type="ECO:0000250" key="1"/>
<evidence type="ECO:0000250" key="2">
    <source>
        <dbReference type="UniProtKB" id="P0DRF2"/>
    </source>
</evidence>
<evidence type="ECO:0000250" key="3">
    <source>
        <dbReference type="UniProtKB" id="P84189"/>
    </source>
</evidence>
<evidence type="ECO:0000256" key="4">
    <source>
        <dbReference type="SAM" id="MobiDB-lite"/>
    </source>
</evidence>
<evidence type="ECO:0000269" key="5">
    <source>
    </source>
</evidence>
<evidence type="ECO:0000269" key="6">
    <source>
    </source>
</evidence>
<evidence type="ECO:0000269" key="7">
    <source>
    </source>
</evidence>
<evidence type="ECO:0000269" key="8">
    <source>
    </source>
</evidence>
<evidence type="ECO:0000303" key="9">
    <source>
    </source>
</evidence>
<evidence type="ECO:0000303" key="10">
    <source>
    </source>
</evidence>
<evidence type="ECO:0000303" key="11">
    <source>
    </source>
</evidence>
<evidence type="ECO:0000305" key="12"/>
<evidence type="ECO:0000305" key="13">
    <source>
    </source>
</evidence>
<evidence type="ECO:0000305" key="14">
    <source>
    </source>
</evidence>
<proteinExistence type="evidence at protein level"/>
<protein>
    <recommendedName>
        <fullName evidence="13">Hypotensin-2</fullName>
    </recommendedName>
    <alternativeName>
        <fullName evidence="9">Hypotensin II</fullName>
        <shortName evidence="9">TsHpt-II</shortName>
    </alternativeName>
    <alternativeName>
        <fullName evidence="10">Toxin Ts14 2</fullName>
    </alternativeName>
    <component>
        <recommendedName>
            <fullName evidence="13">Hypotensin-4</fullName>
        </recommendedName>
        <alternativeName>
            <fullName evidence="9">Hypotensin IV</fullName>
            <shortName evidence="9">TsHpt-IV</shortName>
        </alternativeName>
        <alternativeName>
            <fullName evidence="10">Toxin Ts14 4</fullName>
        </alternativeName>
    </component>
    <component>
        <recommendedName>
            <fullName evidence="11">Cryptide TyPep-8</fullName>
        </recommendedName>
    </component>
</protein>
<name>NDBH2_TITSE</name>
<accession>P84190</accession>
<accession>P84192</accession>